<proteinExistence type="predicted"/>
<keyword id="KW-0472">Membrane</keyword>
<keyword id="KW-1185">Reference proteome</keyword>
<keyword id="KW-0812">Transmembrane</keyword>
<keyword id="KW-1133">Transmembrane helix</keyword>
<gene>
    <name type="ORF">IIV6-325L</name>
</gene>
<evidence type="ECO:0000255" key="1"/>
<evidence type="ECO:0000305" key="2"/>
<dbReference type="EMBL" id="AF303741">
    <property type="protein sequence ID" value="AAK82186.1"/>
    <property type="molecule type" value="Genomic_DNA"/>
</dbReference>
<dbReference type="RefSeq" id="NP_149788.1">
    <property type="nucleotide sequence ID" value="NC_003038.1"/>
</dbReference>
<dbReference type="KEGG" id="vg:1733040"/>
<dbReference type="OrthoDB" id="33885at10239"/>
<dbReference type="Proteomes" id="UP000001359">
    <property type="component" value="Genome"/>
</dbReference>
<dbReference type="GO" id="GO:0016020">
    <property type="term" value="C:membrane"/>
    <property type="evidence" value="ECO:0007669"/>
    <property type="project" value="UniProtKB-SubCell"/>
</dbReference>
<reference key="1">
    <citation type="journal article" date="2001" name="Virology">
        <title>Analysis of the first complete DNA sequence of an invertebrate iridovirus: coding strategy of the genome of Chilo iridescent virus.</title>
        <authorList>
            <person name="Jakob N.J."/>
            <person name="Mueller K."/>
            <person name="Bahr U."/>
            <person name="Darai G."/>
        </authorList>
    </citation>
    <scope>NUCLEOTIDE SEQUENCE [LARGE SCALE GENOMIC DNA]</scope>
</reference>
<reference key="2">
    <citation type="journal article" date="2007" name="Virol. J.">
        <title>Comparative genomic analysis of the family Iridoviridae: re-annotating and defining the core set of iridovirus genes.</title>
        <authorList>
            <person name="Eaton H.E."/>
            <person name="Metcalf J."/>
            <person name="Penny E."/>
            <person name="Tcherepanov V."/>
            <person name="Upton C."/>
            <person name="Brunetti C.R."/>
        </authorList>
    </citation>
    <scope>GENOME REANNOTATION</scope>
</reference>
<organismHost>
    <name type="scientific">Acheta domesticus</name>
    <name type="common">House cricket</name>
    <dbReference type="NCBI Taxonomy" id="6997"/>
</organismHost>
<organismHost>
    <name type="scientific">Chilo suppressalis</name>
    <name type="common">Asiatic rice borer moth</name>
    <dbReference type="NCBI Taxonomy" id="168631"/>
</organismHost>
<organismHost>
    <name type="scientific">Gryllus bimaculatus</name>
    <name type="common">Two-spotted cricket</name>
    <dbReference type="NCBI Taxonomy" id="6999"/>
</organismHost>
<organismHost>
    <name type="scientific">Gryllus campestris</name>
    <dbReference type="NCBI Taxonomy" id="58607"/>
</organismHost>
<organismHost>
    <name type="scientific">Spodoptera frugiperda</name>
    <name type="common">Fall armyworm</name>
    <dbReference type="NCBI Taxonomy" id="7108"/>
</organismHost>
<sequence>MFTQIALILSLIILIFFIYKFAMFKPHVVLTPLEYFNSRKRKILEYLDNYKVKLNVSIPPLTCTDLDKNYDIEEFEVMKQTNPEKFKKYISCGYVHNVYLLTAFEEWINNSLTHSDVSFENFQYLCIRPPADISTVDFKNFKSYIKSCIQTNKTNVTYY</sequence>
<organism>
    <name type="scientific">Invertebrate iridescent virus 6</name>
    <name type="common">IIV-6</name>
    <name type="synonym">Chilo iridescent virus</name>
    <dbReference type="NCBI Taxonomy" id="176652"/>
    <lineage>
        <taxon>Viruses</taxon>
        <taxon>Varidnaviria</taxon>
        <taxon>Bamfordvirae</taxon>
        <taxon>Nucleocytoviricota</taxon>
        <taxon>Megaviricetes</taxon>
        <taxon>Pimascovirales</taxon>
        <taxon>Iridoviridae</taxon>
        <taxon>Betairidovirinae</taxon>
        <taxon>Iridovirus</taxon>
    </lineage>
</organism>
<name>325L_IIV6</name>
<protein>
    <recommendedName>
        <fullName>Uncharacterized protein 325L</fullName>
    </recommendedName>
</protein>
<feature type="chain" id="PRO_0000377859" description="Uncharacterized protein 325L">
    <location>
        <begin position="1"/>
        <end position="159"/>
    </location>
</feature>
<feature type="transmembrane region" description="Helical" evidence="1">
    <location>
        <begin position="4"/>
        <end position="24"/>
    </location>
</feature>
<accession>Q91FJ9</accession>
<comment type="subcellular location">
    <subcellularLocation>
        <location evidence="2">Membrane</location>
        <topology evidence="2">Single-pass membrane protein</topology>
    </subcellularLocation>
</comment>